<proteinExistence type="inferred from homology"/>
<feature type="chain" id="PRO_0000336950" description="7-cyano-7-deazaguanine synthase">
    <location>
        <begin position="1"/>
        <end position="239"/>
    </location>
</feature>
<feature type="binding site" evidence="1">
    <location>
        <begin position="13"/>
        <end position="23"/>
    </location>
    <ligand>
        <name>ATP</name>
        <dbReference type="ChEBI" id="CHEBI:30616"/>
    </ligand>
</feature>
<feature type="binding site" evidence="1">
    <location>
        <position position="192"/>
    </location>
    <ligand>
        <name>Zn(2+)</name>
        <dbReference type="ChEBI" id="CHEBI:29105"/>
    </ligand>
</feature>
<feature type="binding site" evidence="1">
    <location>
        <position position="201"/>
    </location>
    <ligand>
        <name>Zn(2+)</name>
        <dbReference type="ChEBI" id="CHEBI:29105"/>
    </ligand>
</feature>
<feature type="binding site" evidence="1">
    <location>
        <position position="204"/>
    </location>
    <ligand>
        <name>Zn(2+)</name>
        <dbReference type="ChEBI" id="CHEBI:29105"/>
    </ligand>
</feature>
<feature type="binding site" evidence="1">
    <location>
        <position position="207"/>
    </location>
    <ligand>
        <name>Zn(2+)</name>
        <dbReference type="ChEBI" id="CHEBI:29105"/>
    </ligand>
</feature>
<name>QUEC_SHESR</name>
<dbReference type="EC" id="6.3.4.20" evidence="1"/>
<dbReference type="EMBL" id="CP000444">
    <property type="protein sequence ID" value="ABI42905.1"/>
    <property type="molecule type" value="Genomic_DNA"/>
</dbReference>
<dbReference type="SMR" id="Q0HVF0"/>
<dbReference type="KEGG" id="shm:Shewmr7_1916"/>
<dbReference type="HOGENOM" id="CLU_081854_0_0_6"/>
<dbReference type="UniPathway" id="UPA00391"/>
<dbReference type="GO" id="GO:0005524">
    <property type="term" value="F:ATP binding"/>
    <property type="evidence" value="ECO:0007669"/>
    <property type="project" value="UniProtKB-UniRule"/>
</dbReference>
<dbReference type="GO" id="GO:0016879">
    <property type="term" value="F:ligase activity, forming carbon-nitrogen bonds"/>
    <property type="evidence" value="ECO:0007669"/>
    <property type="project" value="UniProtKB-UniRule"/>
</dbReference>
<dbReference type="GO" id="GO:0008270">
    <property type="term" value="F:zinc ion binding"/>
    <property type="evidence" value="ECO:0007669"/>
    <property type="project" value="UniProtKB-UniRule"/>
</dbReference>
<dbReference type="GO" id="GO:0008616">
    <property type="term" value="P:queuosine biosynthetic process"/>
    <property type="evidence" value="ECO:0007669"/>
    <property type="project" value="UniProtKB-UniRule"/>
</dbReference>
<dbReference type="CDD" id="cd01995">
    <property type="entry name" value="QueC-like"/>
    <property type="match status" value="1"/>
</dbReference>
<dbReference type="FunFam" id="3.40.50.620:FF:000017">
    <property type="entry name" value="7-cyano-7-deazaguanine synthase"/>
    <property type="match status" value="1"/>
</dbReference>
<dbReference type="Gene3D" id="3.40.50.620">
    <property type="entry name" value="HUPs"/>
    <property type="match status" value="1"/>
</dbReference>
<dbReference type="HAMAP" id="MF_01633">
    <property type="entry name" value="QueC"/>
    <property type="match status" value="1"/>
</dbReference>
<dbReference type="InterPro" id="IPR018317">
    <property type="entry name" value="QueC"/>
</dbReference>
<dbReference type="InterPro" id="IPR014729">
    <property type="entry name" value="Rossmann-like_a/b/a_fold"/>
</dbReference>
<dbReference type="NCBIfam" id="TIGR00364">
    <property type="entry name" value="7-cyano-7-deazaguanine synthase QueC"/>
    <property type="match status" value="1"/>
</dbReference>
<dbReference type="NCBIfam" id="NF008317">
    <property type="entry name" value="PRK11106.1"/>
    <property type="match status" value="1"/>
</dbReference>
<dbReference type="PANTHER" id="PTHR42914">
    <property type="entry name" value="7-CYANO-7-DEAZAGUANINE SYNTHASE"/>
    <property type="match status" value="1"/>
</dbReference>
<dbReference type="PANTHER" id="PTHR42914:SF1">
    <property type="entry name" value="7-CYANO-7-DEAZAGUANINE SYNTHASE"/>
    <property type="match status" value="1"/>
</dbReference>
<dbReference type="Pfam" id="PF06508">
    <property type="entry name" value="QueC"/>
    <property type="match status" value="1"/>
</dbReference>
<dbReference type="PIRSF" id="PIRSF006293">
    <property type="entry name" value="ExsB"/>
    <property type="match status" value="1"/>
</dbReference>
<dbReference type="SUPFAM" id="SSF52402">
    <property type="entry name" value="Adenine nucleotide alpha hydrolases-like"/>
    <property type="match status" value="1"/>
</dbReference>
<evidence type="ECO:0000255" key="1">
    <source>
        <dbReference type="HAMAP-Rule" id="MF_01633"/>
    </source>
</evidence>
<sequence>MSAASVSKVVVVFSGGQDSTTCLIQALTQFDEVHGITFDYGQRHREEIEVAKSLAKRLKITSHKVMDVSLLNELAISALTRDAIPVSHELMENGLPNTFVPGRNILFLTLAGIFAYQLGAEAIITGVCETDFSGYPDCRHDFVRAMESALVQGMDKKLEIITPLMWLNKAQTWALADKYQQLDLVRHHTLTCYNGIVGDGCGDCPACHLRKRGLEDYLQNKAEVMASLDKATATGKPQA</sequence>
<gene>
    <name evidence="1" type="primary">queC</name>
    <name type="ordered locus">Shewmr7_1916</name>
</gene>
<keyword id="KW-0067">ATP-binding</keyword>
<keyword id="KW-0436">Ligase</keyword>
<keyword id="KW-0479">Metal-binding</keyword>
<keyword id="KW-0547">Nucleotide-binding</keyword>
<keyword id="KW-0671">Queuosine biosynthesis</keyword>
<keyword id="KW-0862">Zinc</keyword>
<accession>Q0HVF0</accession>
<comment type="function">
    <text evidence="1">Catalyzes the ATP-dependent conversion of 7-carboxy-7-deazaguanine (CDG) to 7-cyano-7-deazaguanine (preQ(0)).</text>
</comment>
<comment type="catalytic activity">
    <reaction evidence="1">
        <text>7-carboxy-7-deazaguanine + NH4(+) + ATP = 7-cyano-7-deazaguanine + ADP + phosphate + H2O + H(+)</text>
        <dbReference type="Rhea" id="RHEA:27982"/>
        <dbReference type="ChEBI" id="CHEBI:15377"/>
        <dbReference type="ChEBI" id="CHEBI:15378"/>
        <dbReference type="ChEBI" id="CHEBI:28938"/>
        <dbReference type="ChEBI" id="CHEBI:30616"/>
        <dbReference type="ChEBI" id="CHEBI:43474"/>
        <dbReference type="ChEBI" id="CHEBI:45075"/>
        <dbReference type="ChEBI" id="CHEBI:61036"/>
        <dbReference type="ChEBI" id="CHEBI:456216"/>
        <dbReference type="EC" id="6.3.4.20"/>
    </reaction>
</comment>
<comment type="cofactor">
    <cofactor evidence="1">
        <name>Zn(2+)</name>
        <dbReference type="ChEBI" id="CHEBI:29105"/>
    </cofactor>
    <text evidence="1">Binds 1 zinc ion per subunit.</text>
</comment>
<comment type="pathway">
    <text evidence="1">Purine metabolism; 7-cyano-7-deazaguanine biosynthesis.</text>
</comment>
<comment type="similarity">
    <text evidence="1">Belongs to the QueC family.</text>
</comment>
<protein>
    <recommendedName>
        <fullName evidence="1">7-cyano-7-deazaguanine synthase</fullName>
        <ecNumber evidence="1">6.3.4.20</ecNumber>
    </recommendedName>
    <alternativeName>
        <fullName evidence="1">7-cyano-7-carbaguanine synthase</fullName>
    </alternativeName>
    <alternativeName>
        <fullName evidence="1">PreQ(0) synthase</fullName>
    </alternativeName>
    <alternativeName>
        <fullName evidence="1">Queuosine biosynthesis protein QueC</fullName>
    </alternativeName>
</protein>
<organism>
    <name type="scientific">Shewanella sp. (strain MR-7)</name>
    <dbReference type="NCBI Taxonomy" id="60481"/>
    <lineage>
        <taxon>Bacteria</taxon>
        <taxon>Pseudomonadati</taxon>
        <taxon>Pseudomonadota</taxon>
        <taxon>Gammaproteobacteria</taxon>
        <taxon>Alteromonadales</taxon>
        <taxon>Shewanellaceae</taxon>
        <taxon>Shewanella</taxon>
    </lineage>
</organism>
<reference key="1">
    <citation type="submission" date="2006-08" db="EMBL/GenBank/DDBJ databases">
        <title>Complete sequence of chromosome 1 of Shewanella sp. MR-7.</title>
        <authorList>
            <person name="Copeland A."/>
            <person name="Lucas S."/>
            <person name="Lapidus A."/>
            <person name="Barry K."/>
            <person name="Detter J.C."/>
            <person name="Glavina del Rio T."/>
            <person name="Hammon N."/>
            <person name="Israni S."/>
            <person name="Dalin E."/>
            <person name="Tice H."/>
            <person name="Pitluck S."/>
            <person name="Kiss H."/>
            <person name="Brettin T."/>
            <person name="Bruce D."/>
            <person name="Han C."/>
            <person name="Tapia R."/>
            <person name="Gilna P."/>
            <person name="Schmutz J."/>
            <person name="Larimer F."/>
            <person name="Land M."/>
            <person name="Hauser L."/>
            <person name="Kyrpides N."/>
            <person name="Mikhailova N."/>
            <person name="Nealson K."/>
            <person name="Konstantinidis K."/>
            <person name="Klappenbach J."/>
            <person name="Tiedje J."/>
            <person name="Richardson P."/>
        </authorList>
    </citation>
    <scope>NUCLEOTIDE SEQUENCE [LARGE SCALE GENOMIC DNA]</scope>
    <source>
        <strain>MR-7</strain>
    </source>
</reference>